<organism>
    <name type="scientific">Mycobacterium tuberculosis (strain CDC 1551 / Oshkosh)</name>
    <dbReference type="NCBI Taxonomy" id="83331"/>
    <lineage>
        <taxon>Bacteria</taxon>
        <taxon>Bacillati</taxon>
        <taxon>Actinomycetota</taxon>
        <taxon>Actinomycetes</taxon>
        <taxon>Mycobacteriales</taxon>
        <taxon>Mycobacteriaceae</taxon>
        <taxon>Mycobacterium</taxon>
        <taxon>Mycobacterium tuberculosis complex</taxon>
    </lineage>
</organism>
<protein>
    <recommendedName>
        <fullName evidence="1">4-hydroxy-3-methylbut-2-enyl diphosphate reductase 2</fullName>
        <shortName evidence="1">HMBPP reductase 2</shortName>
        <ecNumber evidence="1">1.17.7.4</ecNumber>
    </recommendedName>
</protein>
<comment type="function">
    <text evidence="1">Catalyzes the conversion of 1-hydroxy-2-methyl-2-(E)-butenyl 4-diphosphate (HMBPP) into a mixture of isopentenyl diphosphate (IPP) and dimethylallyl diphosphate (DMAPP). Acts in the terminal step of the DOXP/MEP pathway for isoprenoid precursor biosynthesis.</text>
</comment>
<comment type="catalytic activity">
    <reaction evidence="1">
        <text>isopentenyl diphosphate + 2 oxidized [2Fe-2S]-[ferredoxin] + H2O = (2E)-4-hydroxy-3-methylbut-2-enyl diphosphate + 2 reduced [2Fe-2S]-[ferredoxin] + 2 H(+)</text>
        <dbReference type="Rhea" id="RHEA:24488"/>
        <dbReference type="Rhea" id="RHEA-COMP:10000"/>
        <dbReference type="Rhea" id="RHEA-COMP:10001"/>
        <dbReference type="ChEBI" id="CHEBI:15377"/>
        <dbReference type="ChEBI" id="CHEBI:15378"/>
        <dbReference type="ChEBI" id="CHEBI:33737"/>
        <dbReference type="ChEBI" id="CHEBI:33738"/>
        <dbReference type="ChEBI" id="CHEBI:128753"/>
        <dbReference type="ChEBI" id="CHEBI:128769"/>
        <dbReference type="EC" id="1.17.7.4"/>
    </reaction>
</comment>
<comment type="catalytic activity">
    <reaction evidence="1">
        <text>dimethylallyl diphosphate + 2 oxidized [2Fe-2S]-[ferredoxin] + H2O = (2E)-4-hydroxy-3-methylbut-2-enyl diphosphate + 2 reduced [2Fe-2S]-[ferredoxin] + 2 H(+)</text>
        <dbReference type="Rhea" id="RHEA:24825"/>
        <dbReference type="Rhea" id="RHEA-COMP:10000"/>
        <dbReference type="Rhea" id="RHEA-COMP:10001"/>
        <dbReference type="ChEBI" id="CHEBI:15377"/>
        <dbReference type="ChEBI" id="CHEBI:15378"/>
        <dbReference type="ChEBI" id="CHEBI:33737"/>
        <dbReference type="ChEBI" id="CHEBI:33738"/>
        <dbReference type="ChEBI" id="CHEBI:57623"/>
        <dbReference type="ChEBI" id="CHEBI:128753"/>
        <dbReference type="EC" id="1.17.7.4"/>
    </reaction>
</comment>
<comment type="cofactor">
    <cofactor evidence="1">
        <name>[4Fe-4S] cluster</name>
        <dbReference type="ChEBI" id="CHEBI:49883"/>
    </cofactor>
    <text evidence="1">Binds 1 [4Fe-4S] cluster per subunit.</text>
</comment>
<comment type="pathway">
    <text evidence="1">Isoprenoid biosynthesis; dimethylallyl diphosphate biosynthesis; dimethylallyl diphosphate from (2E)-4-hydroxy-3-methylbutenyl diphosphate: step 1/1.</text>
</comment>
<comment type="pathway">
    <text evidence="1">Isoprenoid biosynthesis; isopentenyl diphosphate biosynthesis via DXP pathway; isopentenyl diphosphate from 1-deoxy-D-xylulose 5-phosphate: step 6/6.</text>
</comment>
<comment type="similarity">
    <text evidence="1">Belongs to the IspH family.</text>
</comment>
<comment type="sequence caution" evidence="2">
    <conflict type="erroneous initiation">
        <sequence resource="EMBL-CDS" id="AAK45398"/>
    </conflict>
</comment>
<proteinExistence type="inferred from homology"/>
<feature type="chain" id="PRO_0000427660" description="4-hydroxy-3-methylbut-2-enyl diphosphate reductase 2">
    <location>
        <begin position="1"/>
        <end position="335"/>
    </location>
</feature>
<feature type="active site" description="Proton donor" evidence="1">
    <location>
        <position position="151"/>
    </location>
</feature>
<feature type="binding site" evidence="1">
    <location>
        <position position="37"/>
    </location>
    <ligand>
        <name>[4Fe-4S] cluster</name>
        <dbReference type="ChEBI" id="CHEBI:49883"/>
    </ligand>
</feature>
<feature type="binding site" evidence="1">
    <location>
        <position position="66"/>
    </location>
    <ligand>
        <name>(2E)-4-hydroxy-3-methylbut-2-enyl diphosphate</name>
        <dbReference type="ChEBI" id="CHEBI:128753"/>
    </ligand>
</feature>
<feature type="binding site" evidence="1">
    <location>
        <position position="66"/>
    </location>
    <ligand>
        <name>dimethylallyl diphosphate</name>
        <dbReference type="ChEBI" id="CHEBI:57623"/>
    </ligand>
</feature>
<feature type="binding site" evidence="1">
    <location>
        <position position="66"/>
    </location>
    <ligand>
        <name>isopentenyl diphosphate</name>
        <dbReference type="ChEBI" id="CHEBI:128769"/>
    </ligand>
</feature>
<feature type="binding site" evidence="1">
    <location>
        <position position="99"/>
    </location>
    <ligand>
        <name>(2E)-4-hydroxy-3-methylbut-2-enyl diphosphate</name>
        <dbReference type="ChEBI" id="CHEBI:128753"/>
    </ligand>
</feature>
<feature type="binding site" evidence="1">
    <location>
        <position position="99"/>
    </location>
    <ligand>
        <name>dimethylallyl diphosphate</name>
        <dbReference type="ChEBI" id="CHEBI:57623"/>
    </ligand>
</feature>
<feature type="binding site" evidence="1">
    <location>
        <position position="99"/>
    </location>
    <ligand>
        <name>isopentenyl diphosphate</name>
        <dbReference type="ChEBI" id="CHEBI:128769"/>
    </ligand>
</feature>
<feature type="binding site" evidence="1">
    <location>
        <position position="121"/>
    </location>
    <ligand>
        <name>[4Fe-4S] cluster</name>
        <dbReference type="ChEBI" id="CHEBI:49883"/>
    </ligand>
</feature>
<feature type="binding site" evidence="1">
    <location>
        <position position="149"/>
    </location>
    <ligand>
        <name>(2E)-4-hydroxy-3-methylbut-2-enyl diphosphate</name>
        <dbReference type="ChEBI" id="CHEBI:128753"/>
    </ligand>
</feature>
<feature type="binding site" evidence="1">
    <location>
        <position position="149"/>
    </location>
    <ligand>
        <name>dimethylallyl diphosphate</name>
        <dbReference type="ChEBI" id="CHEBI:57623"/>
    </ligand>
</feature>
<feature type="binding site" evidence="1">
    <location>
        <position position="149"/>
    </location>
    <ligand>
        <name>isopentenyl diphosphate</name>
        <dbReference type="ChEBI" id="CHEBI:128769"/>
    </ligand>
</feature>
<feature type="binding site" evidence="1">
    <location>
        <position position="189"/>
    </location>
    <ligand>
        <name>(2E)-4-hydroxy-3-methylbut-2-enyl diphosphate</name>
        <dbReference type="ChEBI" id="CHEBI:128753"/>
    </ligand>
</feature>
<feature type="binding site" evidence="1">
    <location>
        <position position="219"/>
    </location>
    <ligand>
        <name>[4Fe-4S] cluster</name>
        <dbReference type="ChEBI" id="CHEBI:49883"/>
    </ligand>
</feature>
<feature type="binding site" evidence="1">
    <location>
        <position position="247"/>
    </location>
    <ligand>
        <name>(2E)-4-hydroxy-3-methylbut-2-enyl diphosphate</name>
        <dbReference type="ChEBI" id="CHEBI:128753"/>
    </ligand>
</feature>
<feature type="binding site" evidence="1">
    <location>
        <position position="247"/>
    </location>
    <ligand>
        <name>dimethylallyl diphosphate</name>
        <dbReference type="ChEBI" id="CHEBI:57623"/>
    </ligand>
</feature>
<feature type="binding site" evidence="1">
    <location>
        <position position="247"/>
    </location>
    <ligand>
        <name>isopentenyl diphosphate</name>
        <dbReference type="ChEBI" id="CHEBI:128769"/>
    </ligand>
</feature>
<feature type="binding site" evidence="1">
    <location>
        <position position="248"/>
    </location>
    <ligand>
        <name>(2E)-4-hydroxy-3-methylbut-2-enyl diphosphate</name>
        <dbReference type="ChEBI" id="CHEBI:128753"/>
    </ligand>
</feature>
<feature type="binding site" evidence="1">
    <location>
        <position position="248"/>
    </location>
    <ligand>
        <name>dimethylallyl diphosphate</name>
        <dbReference type="ChEBI" id="CHEBI:57623"/>
    </ligand>
</feature>
<feature type="binding site" evidence="1">
    <location>
        <position position="248"/>
    </location>
    <ligand>
        <name>isopentenyl diphosphate</name>
        <dbReference type="ChEBI" id="CHEBI:128769"/>
    </ligand>
</feature>
<feature type="binding site" evidence="1">
    <location>
        <position position="249"/>
    </location>
    <ligand>
        <name>(2E)-4-hydroxy-3-methylbut-2-enyl diphosphate</name>
        <dbReference type="ChEBI" id="CHEBI:128753"/>
    </ligand>
</feature>
<feature type="binding site" evidence="1">
    <location>
        <position position="249"/>
    </location>
    <ligand>
        <name>dimethylallyl diphosphate</name>
        <dbReference type="ChEBI" id="CHEBI:57623"/>
    </ligand>
</feature>
<feature type="binding site" evidence="1">
    <location>
        <position position="249"/>
    </location>
    <ligand>
        <name>isopentenyl diphosphate</name>
        <dbReference type="ChEBI" id="CHEBI:128769"/>
    </ligand>
</feature>
<feature type="binding site" evidence="1">
    <location>
        <position position="292"/>
    </location>
    <ligand>
        <name>(2E)-4-hydroxy-3-methylbut-2-enyl diphosphate</name>
        <dbReference type="ChEBI" id="CHEBI:128753"/>
    </ligand>
</feature>
<feature type="binding site" evidence="1">
    <location>
        <position position="292"/>
    </location>
    <ligand>
        <name>dimethylallyl diphosphate</name>
        <dbReference type="ChEBI" id="CHEBI:57623"/>
    </ligand>
</feature>
<feature type="binding site" evidence="1">
    <location>
        <position position="292"/>
    </location>
    <ligand>
        <name>isopentenyl diphosphate</name>
        <dbReference type="ChEBI" id="CHEBI:128769"/>
    </ligand>
</feature>
<keyword id="KW-0004">4Fe-4S</keyword>
<keyword id="KW-0408">Iron</keyword>
<keyword id="KW-0411">Iron-sulfur</keyword>
<keyword id="KW-0414">Isoprene biosynthesis</keyword>
<keyword id="KW-0479">Metal-binding</keyword>
<keyword id="KW-0560">Oxidoreductase</keyword>
<keyword id="KW-1185">Reference proteome</keyword>
<gene>
    <name evidence="2" type="primary">ispH2</name>
    <name evidence="3" type="synonym">lytB-1</name>
    <name type="ordered locus">MT1141</name>
</gene>
<reference key="1">
    <citation type="journal article" date="2002" name="J. Bacteriol.">
        <title>Whole-genome comparison of Mycobacterium tuberculosis clinical and laboratory strains.</title>
        <authorList>
            <person name="Fleischmann R.D."/>
            <person name="Alland D."/>
            <person name="Eisen J.A."/>
            <person name="Carpenter L."/>
            <person name="White O."/>
            <person name="Peterson J.D."/>
            <person name="DeBoy R.T."/>
            <person name="Dodson R.J."/>
            <person name="Gwinn M.L."/>
            <person name="Haft D.H."/>
            <person name="Hickey E.K."/>
            <person name="Kolonay J.F."/>
            <person name="Nelson W.C."/>
            <person name="Umayam L.A."/>
            <person name="Ermolaeva M.D."/>
            <person name="Salzberg S.L."/>
            <person name="Delcher A."/>
            <person name="Utterback T.R."/>
            <person name="Weidman J.F."/>
            <person name="Khouri H.M."/>
            <person name="Gill J."/>
            <person name="Mikula A."/>
            <person name="Bishai W."/>
            <person name="Jacobs W.R. Jr."/>
            <person name="Venter J.C."/>
            <person name="Fraser C.M."/>
        </authorList>
    </citation>
    <scope>NUCLEOTIDE SEQUENCE [LARGE SCALE GENOMIC DNA]</scope>
    <source>
        <strain>CDC 1551 / Oshkosh</strain>
    </source>
</reference>
<sequence length="335" mass="36297">MVPTVDMGIPGASVSSRSVADRPNRKRVLLAEPRGYCAGVDRAVETVERALQKHGPPVYVRHEIVHNRHVVDTLAKAGAVFVEETEQVPEGAIVVFSAHGVAPTVHVSASERNLQVIDATCPLVTKVHNEARRFARDDYDILLIGHEGHEEVVGTAGEAPDHVQLVDGVDAVDQVTVRDEDKVVWLSQTTLSVDETMEIVGRLRRRFPKLQDPPSDDICYATQNRQVAVKAMAPECELVIVVGSRNSSNSVRLVEVALGAGARAAHLVDWADDIDSAWLDGVTTVGVTSGASVPEVLVRGVLERLAECGYDIVQPVTTANETLVFALPRELRSPR</sequence>
<dbReference type="EC" id="1.17.7.4" evidence="1"/>
<dbReference type="EMBL" id="AE000516">
    <property type="protein sequence ID" value="AAK45398.1"/>
    <property type="status" value="ALT_INIT"/>
    <property type="molecule type" value="Genomic_DNA"/>
</dbReference>
<dbReference type="PIR" id="D70898">
    <property type="entry name" value="D70898"/>
</dbReference>
<dbReference type="RefSeq" id="WP_003405853.1">
    <property type="nucleotide sequence ID" value="NZ_KK341227.1"/>
</dbReference>
<dbReference type="SMR" id="P9WKG0"/>
<dbReference type="KEGG" id="mtc:MT1141"/>
<dbReference type="PATRIC" id="fig|83331.31.peg.1233"/>
<dbReference type="HOGENOM" id="CLU_027486_1_0_11"/>
<dbReference type="UniPathway" id="UPA00056">
    <property type="reaction ID" value="UER00097"/>
</dbReference>
<dbReference type="UniPathway" id="UPA00059">
    <property type="reaction ID" value="UER00105"/>
</dbReference>
<dbReference type="Proteomes" id="UP000001020">
    <property type="component" value="Chromosome"/>
</dbReference>
<dbReference type="GO" id="GO:0051539">
    <property type="term" value="F:4 iron, 4 sulfur cluster binding"/>
    <property type="evidence" value="ECO:0007669"/>
    <property type="project" value="UniProtKB-UniRule"/>
</dbReference>
<dbReference type="GO" id="GO:0051745">
    <property type="term" value="F:4-hydroxy-3-methylbut-2-enyl diphosphate reductase activity"/>
    <property type="evidence" value="ECO:0007669"/>
    <property type="project" value="UniProtKB-UniRule"/>
</dbReference>
<dbReference type="GO" id="GO:0046872">
    <property type="term" value="F:metal ion binding"/>
    <property type="evidence" value="ECO:0007669"/>
    <property type="project" value="UniProtKB-KW"/>
</dbReference>
<dbReference type="GO" id="GO:0050992">
    <property type="term" value="P:dimethylallyl diphosphate biosynthetic process"/>
    <property type="evidence" value="ECO:0007669"/>
    <property type="project" value="UniProtKB-UniRule"/>
</dbReference>
<dbReference type="GO" id="GO:0019288">
    <property type="term" value="P:isopentenyl diphosphate biosynthetic process, methylerythritol 4-phosphate pathway"/>
    <property type="evidence" value="ECO:0007669"/>
    <property type="project" value="UniProtKB-UniRule"/>
</dbReference>
<dbReference type="GO" id="GO:0016114">
    <property type="term" value="P:terpenoid biosynthetic process"/>
    <property type="evidence" value="ECO:0007669"/>
    <property type="project" value="UniProtKB-UniRule"/>
</dbReference>
<dbReference type="CDD" id="cd13944">
    <property type="entry name" value="lytB_ispH"/>
    <property type="match status" value="1"/>
</dbReference>
<dbReference type="Gene3D" id="3.40.50.11270">
    <property type="match status" value="1"/>
</dbReference>
<dbReference type="Gene3D" id="3.40.1010.20">
    <property type="entry name" value="4-hydroxy-3-methylbut-2-enyl diphosphate reductase, catalytic domain"/>
    <property type="match status" value="2"/>
</dbReference>
<dbReference type="HAMAP" id="MF_00191">
    <property type="entry name" value="IspH"/>
    <property type="match status" value="1"/>
</dbReference>
<dbReference type="InterPro" id="IPR003451">
    <property type="entry name" value="LytB/IspH"/>
</dbReference>
<dbReference type="NCBIfam" id="TIGR00216">
    <property type="entry name" value="ispH_lytB"/>
    <property type="match status" value="1"/>
</dbReference>
<dbReference type="NCBIfam" id="NF002188">
    <property type="entry name" value="PRK01045.1-2"/>
    <property type="match status" value="1"/>
</dbReference>
<dbReference type="NCBIfam" id="NF002189">
    <property type="entry name" value="PRK01045.1-3"/>
    <property type="match status" value="1"/>
</dbReference>
<dbReference type="NCBIfam" id="NF002190">
    <property type="entry name" value="PRK01045.1-4"/>
    <property type="match status" value="1"/>
</dbReference>
<dbReference type="PANTHER" id="PTHR30426">
    <property type="entry name" value="4-HYDROXY-3-METHYLBUT-2-ENYL DIPHOSPHATE REDUCTASE"/>
    <property type="match status" value="1"/>
</dbReference>
<dbReference type="PANTHER" id="PTHR30426:SF0">
    <property type="entry name" value="4-HYDROXY-3-METHYLBUT-2-ENYL DIPHOSPHATE REDUCTASE"/>
    <property type="match status" value="1"/>
</dbReference>
<dbReference type="Pfam" id="PF02401">
    <property type="entry name" value="LYTB"/>
    <property type="match status" value="1"/>
</dbReference>
<name>ISPH2_MYCTO</name>
<evidence type="ECO:0000255" key="1">
    <source>
        <dbReference type="HAMAP-Rule" id="MF_00191"/>
    </source>
</evidence>
<evidence type="ECO:0000305" key="2"/>
<evidence type="ECO:0000312" key="3">
    <source>
        <dbReference type="EMBL" id="AAK45398.1"/>
    </source>
</evidence>
<accession>P9WKG0</accession>
<accession>L0T8I1</accession>
<accession>O53458</accession>
<accession>P0A5I0</accession>